<gene>
    <name evidence="1" type="primary">groES</name>
    <name evidence="1" type="synonym">groS</name>
    <name type="ordered locus">LJ_0460</name>
</gene>
<reference key="1">
    <citation type="journal article" date="1999" name="Appl. Environ. Microbiol.">
        <title>The groESL chaperone operon of Lactobacillus johnsonii.</title>
        <authorList>
            <person name="Walker D.C."/>
            <person name="Girgis H.S."/>
            <person name="Klaenhammer T.R."/>
        </authorList>
    </citation>
    <scope>NUCLEOTIDE SEQUENCE [GENOMIC DNA]</scope>
    <source>
        <strain>ATCC 11506 / JCM 1101 / NBRC 13952 / NCIMB 8795 / R-26 / VPI 11088</strain>
    </source>
</reference>
<reference key="2">
    <citation type="journal article" date="2004" name="Proc. Natl. Acad. Sci. U.S.A.">
        <title>The genome sequence of the probiotic intestinal bacterium Lactobacillus johnsonii NCC 533.</title>
        <authorList>
            <person name="Pridmore R.D."/>
            <person name="Berger B."/>
            <person name="Desiere F."/>
            <person name="Vilanova D."/>
            <person name="Barretto C."/>
            <person name="Pittet A.-C."/>
            <person name="Zwahlen M.-C."/>
            <person name="Rouvet M."/>
            <person name="Altermann E."/>
            <person name="Barrangou R."/>
            <person name="Mollet B."/>
            <person name="Mercenier A."/>
            <person name="Klaenhammer T."/>
            <person name="Arigoni F."/>
            <person name="Schell M.A."/>
        </authorList>
    </citation>
    <scope>NUCLEOTIDE SEQUENCE [LARGE SCALE GENOMIC DNA]</scope>
    <source>
        <strain>CNCM I-1225 / La1 / NCC 533</strain>
    </source>
</reference>
<proteinExistence type="inferred from homology"/>
<name>CH10_LACJO</name>
<dbReference type="EMBL" id="AF214488">
    <property type="protein sequence ID" value="AAF75592.1"/>
    <property type="molecule type" value="Genomic_DNA"/>
</dbReference>
<dbReference type="EMBL" id="AE017198">
    <property type="protein sequence ID" value="AAS08452.1"/>
    <property type="molecule type" value="Genomic_DNA"/>
</dbReference>
<dbReference type="RefSeq" id="WP_003647727.1">
    <property type="nucleotide sequence ID" value="NC_005362.1"/>
</dbReference>
<dbReference type="SMR" id="Q9KJ24"/>
<dbReference type="GeneID" id="83569886"/>
<dbReference type="KEGG" id="ljo:LJ_0460"/>
<dbReference type="eggNOG" id="COG0234">
    <property type="taxonomic scope" value="Bacteria"/>
</dbReference>
<dbReference type="HOGENOM" id="CLU_132825_2_1_9"/>
<dbReference type="Proteomes" id="UP000000581">
    <property type="component" value="Chromosome"/>
</dbReference>
<dbReference type="GO" id="GO:0005737">
    <property type="term" value="C:cytoplasm"/>
    <property type="evidence" value="ECO:0007669"/>
    <property type="project" value="UniProtKB-SubCell"/>
</dbReference>
<dbReference type="GO" id="GO:0005524">
    <property type="term" value="F:ATP binding"/>
    <property type="evidence" value="ECO:0007669"/>
    <property type="project" value="InterPro"/>
</dbReference>
<dbReference type="GO" id="GO:0046872">
    <property type="term" value="F:metal ion binding"/>
    <property type="evidence" value="ECO:0007669"/>
    <property type="project" value="TreeGrafter"/>
</dbReference>
<dbReference type="GO" id="GO:0044183">
    <property type="term" value="F:protein folding chaperone"/>
    <property type="evidence" value="ECO:0007669"/>
    <property type="project" value="InterPro"/>
</dbReference>
<dbReference type="GO" id="GO:0051087">
    <property type="term" value="F:protein-folding chaperone binding"/>
    <property type="evidence" value="ECO:0007669"/>
    <property type="project" value="TreeGrafter"/>
</dbReference>
<dbReference type="GO" id="GO:0051082">
    <property type="term" value="F:unfolded protein binding"/>
    <property type="evidence" value="ECO:0007669"/>
    <property type="project" value="TreeGrafter"/>
</dbReference>
<dbReference type="GO" id="GO:0051085">
    <property type="term" value="P:chaperone cofactor-dependent protein refolding"/>
    <property type="evidence" value="ECO:0007669"/>
    <property type="project" value="TreeGrafter"/>
</dbReference>
<dbReference type="CDD" id="cd00320">
    <property type="entry name" value="cpn10"/>
    <property type="match status" value="1"/>
</dbReference>
<dbReference type="FunFam" id="2.30.33.40:FF:000001">
    <property type="entry name" value="10 kDa chaperonin"/>
    <property type="match status" value="1"/>
</dbReference>
<dbReference type="Gene3D" id="2.30.33.40">
    <property type="entry name" value="GroES chaperonin"/>
    <property type="match status" value="1"/>
</dbReference>
<dbReference type="HAMAP" id="MF_00580">
    <property type="entry name" value="CH10"/>
    <property type="match status" value="1"/>
</dbReference>
<dbReference type="InterPro" id="IPR020818">
    <property type="entry name" value="Chaperonin_GroES"/>
</dbReference>
<dbReference type="InterPro" id="IPR037124">
    <property type="entry name" value="Chaperonin_GroES_sf"/>
</dbReference>
<dbReference type="InterPro" id="IPR018369">
    <property type="entry name" value="Chaprnonin_Cpn10_CS"/>
</dbReference>
<dbReference type="InterPro" id="IPR011032">
    <property type="entry name" value="GroES-like_sf"/>
</dbReference>
<dbReference type="NCBIfam" id="NF001531">
    <property type="entry name" value="PRK00364.2-2"/>
    <property type="match status" value="1"/>
</dbReference>
<dbReference type="NCBIfam" id="NF001533">
    <property type="entry name" value="PRK00364.2-4"/>
    <property type="match status" value="1"/>
</dbReference>
<dbReference type="NCBIfam" id="NF001534">
    <property type="entry name" value="PRK00364.2-5"/>
    <property type="match status" value="1"/>
</dbReference>
<dbReference type="PANTHER" id="PTHR10772">
    <property type="entry name" value="10 KDA HEAT SHOCK PROTEIN"/>
    <property type="match status" value="1"/>
</dbReference>
<dbReference type="PANTHER" id="PTHR10772:SF58">
    <property type="entry name" value="CO-CHAPERONIN GROES"/>
    <property type="match status" value="1"/>
</dbReference>
<dbReference type="Pfam" id="PF00166">
    <property type="entry name" value="Cpn10"/>
    <property type="match status" value="1"/>
</dbReference>
<dbReference type="PRINTS" id="PR00297">
    <property type="entry name" value="CHAPERONIN10"/>
</dbReference>
<dbReference type="SMART" id="SM00883">
    <property type="entry name" value="Cpn10"/>
    <property type="match status" value="1"/>
</dbReference>
<dbReference type="SUPFAM" id="SSF50129">
    <property type="entry name" value="GroES-like"/>
    <property type="match status" value="1"/>
</dbReference>
<dbReference type="PROSITE" id="PS00681">
    <property type="entry name" value="CHAPERONINS_CPN10"/>
    <property type="match status" value="1"/>
</dbReference>
<accession>Q9KJ24</accession>
<organism>
    <name type="scientific">Lactobacillus johnsonii (strain CNCM I-12250 / La1 / NCC 533)</name>
    <dbReference type="NCBI Taxonomy" id="257314"/>
    <lineage>
        <taxon>Bacteria</taxon>
        <taxon>Bacillati</taxon>
        <taxon>Bacillota</taxon>
        <taxon>Bacilli</taxon>
        <taxon>Lactobacillales</taxon>
        <taxon>Lactobacillaceae</taxon>
        <taxon>Lactobacillus</taxon>
    </lineage>
</organism>
<keyword id="KW-0143">Chaperone</keyword>
<keyword id="KW-0963">Cytoplasm</keyword>
<comment type="function">
    <text evidence="1">Together with the chaperonin GroEL, plays an essential role in assisting protein folding. The GroEL-GroES system forms a nano-cage that allows encapsulation of the non-native substrate proteins and provides a physical environment optimized to promote and accelerate protein folding. GroES binds to the apical surface of the GroEL ring, thereby capping the opening of the GroEL channel.</text>
</comment>
<comment type="subunit">
    <text evidence="1">Heptamer of 7 subunits arranged in a ring. Interacts with the chaperonin GroEL.</text>
</comment>
<comment type="subcellular location">
    <subcellularLocation>
        <location evidence="1">Cytoplasm</location>
    </subcellularLocation>
</comment>
<comment type="similarity">
    <text evidence="1">Belongs to the GroES chaperonin family.</text>
</comment>
<sequence>MLQPIGDRVIVKVKDEEEEKVGGIVLASNAKEKPQMGEIIAVGNGKRNANGDLIPMSVAKGETVFFDKYSGTNLKYEGEKYLVLRESDLLAVVK</sequence>
<protein>
    <recommendedName>
        <fullName evidence="1">Co-chaperonin GroES</fullName>
    </recommendedName>
    <alternativeName>
        <fullName evidence="1">10 kDa chaperonin</fullName>
    </alternativeName>
    <alternativeName>
        <fullName evidence="1">Chaperonin-10</fullName>
        <shortName evidence="1">Cpn10</shortName>
    </alternativeName>
</protein>
<evidence type="ECO:0000255" key="1">
    <source>
        <dbReference type="HAMAP-Rule" id="MF_00580"/>
    </source>
</evidence>
<feature type="chain" id="PRO_0000174769" description="Co-chaperonin GroES">
    <location>
        <begin position="1"/>
        <end position="94"/>
    </location>
</feature>